<evidence type="ECO:0000305" key="1"/>
<comment type="similarity">
    <text evidence="1">Belongs to the glycosyltransferase group 1 family. Glycosyltransferase 4 subfamily.</text>
</comment>
<feature type="chain" id="PRO_0000080324" description="Uncharacterized glycosyltransferase MJ1607">
    <location>
        <begin position="1"/>
        <end position="390"/>
    </location>
</feature>
<accession>Q59002</accession>
<name>Y1607_METJA</name>
<reference key="1">
    <citation type="journal article" date="1996" name="Science">
        <title>Complete genome sequence of the methanogenic archaeon, Methanococcus jannaschii.</title>
        <authorList>
            <person name="Bult C.J."/>
            <person name="White O."/>
            <person name="Olsen G.J."/>
            <person name="Zhou L."/>
            <person name="Fleischmann R.D."/>
            <person name="Sutton G.G."/>
            <person name="Blake J.A."/>
            <person name="FitzGerald L.M."/>
            <person name="Clayton R.A."/>
            <person name="Gocayne J.D."/>
            <person name="Kerlavage A.R."/>
            <person name="Dougherty B.A."/>
            <person name="Tomb J.-F."/>
            <person name="Adams M.D."/>
            <person name="Reich C.I."/>
            <person name="Overbeek R."/>
            <person name="Kirkness E.F."/>
            <person name="Weinstock K.G."/>
            <person name="Merrick J.M."/>
            <person name="Glodek A."/>
            <person name="Scott J.L."/>
            <person name="Geoghagen N.S.M."/>
            <person name="Weidman J.F."/>
            <person name="Fuhrmann J.L."/>
            <person name="Nguyen D."/>
            <person name="Utterback T.R."/>
            <person name="Kelley J.M."/>
            <person name="Peterson J.D."/>
            <person name="Sadow P.W."/>
            <person name="Hanna M.C."/>
            <person name="Cotton M.D."/>
            <person name="Roberts K.M."/>
            <person name="Hurst M.A."/>
            <person name="Kaine B.P."/>
            <person name="Borodovsky M."/>
            <person name="Klenk H.-P."/>
            <person name="Fraser C.M."/>
            <person name="Smith H.O."/>
            <person name="Woese C.R."/>
            <person name="Venter J.C."/>
        </authorList>
    </citation>
    <scope>NUCLEOTIDE SEQUENCE [LARGE SCALE GENOMIC DNA]</scope>
    <source>
        <strain>ATCC 43067 / DSM 2661 / JAL-1 / JCM 10045 / NBRC 100440</strain>
    </source>
</reference>
<protein>
    <recommendedName>
        <fullName>Uncharacterized glycosyltransferase MJ1607</fullName>
        <ecNumber>2.4.-.-</ecNumber>
    </recommendedName>
</protein>
<keyword id="KW-0328">Glycosyltransferase</keyword>
<keyword id="KW-1185">Reference proteome</keyword>
<keyword id="KW-0808">Transferase</keyword>
<proteinExistence type="inferred from homology"/>
<dbReference type="EC" id="2.4.-.-"/>
<dbReference type="EMBL" id="L77117">
    <property type="protein sequence ID" value="AAB99629.1"/>
    <property type="molecule type" value="Genomic_DNA"/>
</dbReference>
<dbReference type="PIR" id="F64500">
    <property type="entry name" value="F64500"/>
</dbReference>
<dbReference type="RefSeq" id="WP_010871132.1">
    <property type="nucleotide sequence ID" value="NC_000909.1"/>
</dbReference>
<dbReference type="SMR" id="Q59002"/>
<dbReference type="FunCoup" id="Q59002">
    <property type="interactions" value="81"/>
</dbReference>
<dbReference type="STRING" id="243232.MJ_1607"/>
<dbReference type="CAZy" id="GT4">
    <property type="family name" value="Glycosyltransferase Family 4"/>
</dbReference>
<dbReference type="PaxDb" id="243232-MJ_1607"/>
<dbReference type="DNASU" id="1452516"/>
<dbReference type="EnsemblBacteria" id="AAB99629">
    <property type="protein sequence ID" value="AAB99629"/>
    <property type="gene ID" value="MJ_1607"/>
</dbReference>
<dbReference type="GeneID" id="1452516"/>
<dbReference type="KEGG" id="mja:MJ_1607"/>
<dbReference type="eggNOG" id="arCOG01403">
    <property type="taxonomic scope" value="Archaea"/>
</dbReference>
<dbReference type="HOGENOM" id="CLU_009583_2_3_2"/>
<dbReference type="InParanoid" id="Q59002"/>
<dbReference type="OrthoDB" id="132546at2157"/>
<dbReference type="PhylomeDB" id="Q59002"/>
<dbReference type="Proteomes" id="UP000000805">
    <property type="component" value="Chromosome"/>
</dbReference>
<dbReference type="GO" id="GO:0016757">
    <property type="term" value="F:glycosyltransferase activity"/>
    <property type="evidence" value="ECO:0000318"/>
    <property type="project" value="GO_Central"/>
</dbReference>
<dbReference type="CDD" id="cd03801">
    <property type="entry name" value="GT4_PimA-like"/>
    <property type="match status" value="1"/>
</dbReference>
<dbReference type="Gene3D" id="3.40.50.2000">
    <property type="entry name" value="Glycogen Phosphorylase B"/>
    <property type="match status" value="2"/>
</dbReference>
<dbReference type="InterPro" id="IPR001296">
    <property type="entry name" value="Glyco_trans_1"/>
</dbReference>
<dbReference type="InterPro" id="IPR028098">
    <property type="entry name" value="Glyco_trans_4-like_N"/>
</dbReference>
<dbReference type="InterPro" id="IPR050194">
    <property type="entry name" value="Glycosyltransferase_grp1"/>
</dbReference>
<dbReference type="PANTHER" id="PTHR45947">
    <property type="entry name" value="SULFOQUINOVOSYL TRANSFERASE SQD2"/>
    <property type="match status" value="1"/>
</dbReference>
<dbReference type="PANTHER" id="PTHR45947:SF3">
    <property type="entry name" value="SULFOQUINOVOSYL TRANSFERASE SQD2"/>
    <property type="match status" value="1"/>
</dbReference>
<dbReference type="Pfam" id="PF13439">
    <property type="entry name" value="Glyco_transf_4"/>
    <property type="match status" value="1"/>
</dbReference>
<dbReference type="Pfam" id="PF00534">
    <property type="entry name" value="Glycos_transf_1"/>
    <property type="match status" value="1"/>
</dbReference>
<dbReference type="SUPFAM" id="SSF53756">
    <property type="entry name" value="UDP-Glycosyltransferase/glycogen phosphorylase"/>
    <property type="match status" value="1"/>
</dbReference>
<organism>
    <name type="scientific">Methanocaldococcus jannaschii (strain ATCC 43067 / DSM 2661 / JAL-1 / JCM 10045 / NBRC 100440)</name>
    <name type="common">Methanococcus jannaschii</name>
    <dbReference type="NCBI Taxonomy" id="243232"/>
    <lineage>
        <taxon>Archaea</taxon>
        <taxon>Methanobacteriati</taxon>
        <taxon>Methanobacteriota</taxon>
        <taxon>Methanomada group</taxon>
        <taxon>Methanococci</taxon>
        <taxon>Methanococcales</taxon>
        <taxon>Methanocaldococcaceae</taxon>
        <taxon>Methanocaldococcus</taxon>
    </lineage>
</organism>
<gene>
    <name type="ordered locus">MJ1607</name>
</gene>
<sequence length="390" mass="44446">MKIAMVTWEYPPRIVGGLAIHCKGLAEGLVRNGHEVDVITVGYDLPEYENINGVNVYRVRPISHPHFLTWAMFMAEEMEKKLGILGVDKYDVIHCHDWMTHFVGANLKHICRMPYVQSIHSTEIGRCGGLYSDDSKAIHAMEYLSTYESCQVITVSKSLKEEVCSIFNTPEDKVKVIYNGINPWEFDINLSWEEKINFRRSIGVQDDEKMILFVGRLTYQKGIEYLIRAMPKILERHNAKLVIAGSGDMRDYLEDLCYQLGVRHKVVFLGFVNGDTLKKLYKSADVVVIPSVYEPFGIVALEAMAAGTPVVVSSVGGLMEIIKHEVNGIWVYPKNPDSIAWGVDRVLSDWGFREYIVNNAKKDVYEKYSWDNIAKETVNVYKIAMEMMGR</sequence>